<gene>
    <name evidence="1" type="primary">ccsB</name>
    <name evidence="1" type="synonym">ccs1</name>
    <name type="ordered locus">P9303_04711</name>
</gene>
<feature type="chain" id="PRO_0000363621" description="Cytochrome c biogenesis protein CcsB">
    <location>
        <begin position="1"/>
        <end position="432"/>
    </location>
</feature>
<feature type="transmembrane region" description="Helical" evidence="1">
    <location>
        <begin position="14"/>
        <end position="34"/>
    </location>
</feature>
<feature type="transmembrane region" description="Helical" evidence="1">
    <location>
        <begin position="72"/>
        <end position="92"/>
    </location>
</feature>
<feature type="transmembrane region" description="Helical" evidence="1">
    <location>
        <begin position="162"/>
        <end position="182"/>
    </location>
</feature>
<evidence type="ECO:0000255" key="1">
    <source>
        <dbReference type="HAMAP-Rule" id="MF_01392"/>
    </source>
</evidence>
<name>CCS1_PROM3</name>
<accession>A2C6W3</accession>
<keyword id="KW-0201">Cytochrome c-type biogenesis</keyword>
<keyword id="KW-0472">Membrane</keyword>
<keyword id="KW-0793">Thylakoid</keyword>
<keyword id="KW-0812">Transmembrane</keyword>
<keyword id="KW-1133">Transmembrane helix</keyword>
<organism>
    <name type="scientific">Prochlorococcus marinus (strain MIT 9303)</name>
    <dbReference type="NCBI Taxonomy" id="59922"/>
    <lineage>
        <taxon>Bacteria</taxon>
        <taxon>Bacillati</taxon>
        <taxon>Cyanobacteriota</taxon>
        <taxon>Cyanophyceae</taxon>
        <taxon>Synechococcales</taxon>
        <taxon>Prochlorococcaceae</taxon>
        <taxon>Prochlorococcus</taxon>
    </lineage>
</organism>
<sequence length="432" mass="47166">MVTLKRLLAWISDLRIAIGLLFVIALSSALGTAIPQGELRDSYLEGYSDKPWLGFVNGSMILRLQLDHVYTSSWFLALLAWLGLALILCSWRRQWPALQAALQWIDYQEPRQLSKLAIAETISSPPKNESIDKLAAHLHQQGWQVQQQPGRLAARRGIIGRVGPMLVHLGLVLLMLGAVWGSLGGNRLEQFLAPGRSLDLLNRDGNSHLKLTLTNFGIERDPAGRPEQFRSQLELLEPGQDTAKLHEVSVNHPLRFHGLTVYQADWSLAAITLQLGRSPLLQLPLRTFPELGEQVWGLVLPTNPDGSEPVLLSLTSEAGPVQVFDATGERLASLRPAGPTAEVKGIPIRVVEVLPASGLLLKRDPGVPLVYIGFLITLVGGGLSMIATRQLWAVGDPENECLHVGGLCNRNLTGFANELPSLLASITPASQH</sequence>
<protein>
    <recommendedName>
        <fullName evidence="1">Cytochrome c biogenesis protein CcsB</fullName>
    </recommendedName>
</protein>
<reference key="1">
    <citation type="journal article" date="2007" name="PLoS Genet.">
        <title>Patterns and implications of gene gain and loss in the evolution of Prochlorococcus.</title>
        <authorList>
            <person name="Kettler G.C."/>
            <person name="Martiny A.C."/>
            <person name="Huang K."/>
            <person name="Zucker J."/>
            <person name="Coleman M.L."/>
            <person name="Rodrigue S."/>
            <person name="Chen F."/>
            <person name="Lapidus A."/>
            <person name="Ferriera S."/>
            <person name="Johnson J."/>
            <person name="Steglich C."/>
            <person name="Church G.M."/>
            <person name="Richardson P."/>
            <person name="Chisholm S.W."/>
        </authorList>
    </citation>
    <scope>NUCLEOTIDE SEQUENCE [LARGE SCALE GENOMIC DNA]</scope>
    <source>
        <strain>MIT 9303</strain>
    </source>
</reference>
<comment type="function">
    <text evidence="1">Required during biogenesis of c-type cytochromes (cytochrome c6 and cytochrome f) at the step of heme attachment.</text>
</comment>
<comment type="subunit">
    <text evidence="1">May interact with CcsA.</text>
</comment>
<comment type="subcellular location">
    <subcellularLocation>
        <location evidence="1">Cellular thylakoid membrane</location>
        <topology evidence="1">Multi-pass membrane protein</topology>
    </subcellularLocation>
</comment>
<comment type="similarity">
    <text evidence="1">Belongs to the Ccs1/CcsB family.</text>
</comment>
<proteinExistence type="inferred from homology"/>
<dbReference type="EMBL" id="CP000554">
    <property type="protein sequence ID" value="ABM77223.1"/>
    <property type="molecule type" value="Genomic_DNA"/>
</dbReference>
<dbReference type="RefSeq" id="WP_011825147.1">
    <property type="nucleotide sequence ID" value="NC_008820.1"/>
</dbReference>
<dbReference type="SMR" id="A2C6W3"/>
<dbReference type="STRING" id="59922.P9303_04711"/>
<dbReference type="KEGG" id="pmf:P9303_04711"/>
<dbReference type="HOGENOM" id="CLU_034630_0_0_3"/>
<dbReference type="BioCyc" id="PMAR59922:G1G80-435-MONOMER"/>
<dbReference type="Proteomes" id="UP000002274">
    <property type="component" value="Chromosome"/>
</dbReference>
<dbReference type="GO" id="GO:0031676">
    <property type="term" value="C:plasma membrane-derived thylakoid membrane"/>
    <property type="evidence" value="ECO:0007669"/>
    <property type="project" value="UniProtKB-SubCell"/>
</dbReference>
<dbReference type="GO" id="GO:0017004">
    <property type="term" value="P:cytochrome complex assembly"/>
    <property type="evidence" value="ECO:0007669"/>
    <property type="project" value="UniProtKB-UniRule"/>
</dbReference>
<dbReference type="HAMAP" id="MF_01392">
    <property type="entry name" value="CytC_Ccs1"/>
    <property type="match status" value="1"/>
</dbReference>
<dbReference type="InterPro" id="IPR023494">
    <property type="entry name" value="Cyt_c_bgen_Ccs1/CcsB/ResB"/>
</dbReference>
<dbReference type="InterPro" id="IPR007816">
    <property type="entry name" value="ResB-like_domain"/>
</dbReference>
<dbReference type="PANTHER" id="PTHR31566">
    <property type="entry name" value="CYTOCHROME C BIOGENESIS PROTEIN CCS1, CHLOROPLASTIC"/>
    <property type="match status" value="1"/>
</dbReference>
<dbReference type="PANTHER" id="PTHR31566:SF0">
    <property type="entry name" value="CYTOCHROME C BIOGENESIS PROTEIN CCS1, CHLOROPLASTIC"/>
    <property type="match status" value="1"/>
</dbReference>
<dbReference type="Pfam" id="PF05140">
    <property type="entry name" value="ResB"/>
    <property type="match status" value="2"/>
</dbReference>